<name>RS16_PHYAS</name>
<protein>
    <recommendedName>
        <fullName evidence="1">Small ribosomal subunit protein bS16</fullName>
    </recommendedName>
    <alternativeName>
        <fullName evidence="2">30S ribosomal protein S16</fullName>
    </alternativeName>
</protein>
<evidence type="ECO:0000255" key="1">
    <source>
        <dbReference type="HAMAP-Rule" id="MF_00385"/>
    </source>
</evidence>
<evidence type="ECO:0000305" key="2"/>
<proteinExistence type="inferred from homology"/>
<gene>
    <name evidence="1" type="primary">rpsP</name>
    <name type="ordered locus">PA0549</name>
</gene>
<dbReference type="EMBL" id="AM422018">
    <property type="protein sequence ID" value="CAM11883.1"/>
    <property type="molecule type" value="Genomic_DNA"/>
</dbReference>
<dbReference type="SMR" id="B1VAB0"/>
<dbReference type="STRING" id="59748.PA0549"/>
<dbReference type="KEGG" id="pal:PA0549"/>
<dbReference type="eggNOG" id="COG0228">
    <property type="taxonomic scope" value="Bacteria"/>
</dbReference>
<dbReference type="Proteomes" id="UP000008323">
    <property type="component" value="Chromosome"/>
</dbReference>
<dbReference type="GO" id="GO:0005737">
    <property type="term" value="C:cytoplasm"/>
    <property type="evidence" value="ECO:0007669"/>
    <property type="project" value="UniProtKB-ARBA"/>
</dbReference>
<dbReference type="GO" id="GO:0015935">
    <property type="term" value="C:small ribosomal subunit"/>
    <property type="evidence" value="ECO:0007669"/>
    <property type="project" value="TreeGrafter"/>
</dbReference>
<dbReference type="GO" id="GO:0003735">
    <property type="term" value="F:structural constituent of ribosome"/>
    <property type="evidence" value="ECO:0007669"/>
    <property type="project" value="InterPro"/>
</dbReference>
<dbReference type="GO" id="GO:0006412">
    <property type="term" value="P:translation"/>
    <property type="evidence" value="ECO:0007669"/>
    <property type="project" value="UniProtKB-UniRule"/>
</dbReference>
<dbReference type="Gene3D" id="3.30.1320.10">
    <property type="match status" value="1"/>
</dbReference>
<dbReference type="HAMAP" id="MF_00385">
    <property type="entry name" value="Ribosomal_bS16"/>
    <property type="match status" value="1"/>
</dbReference>
<dbReference type="InterPro" id="IPR000307">
    <property type="entry name" value="Ribosomal_bS16"/>
</dbReference>
<dbReference type="InterPro" id="IPR023803">
    <property type="entry name" value="Ribosomal_bS16_dom_sf"/>
</dbReference>
<dbReference type="NCBIfam" id="TIGR00002">
    <property type="entry name" value="S16"/>
    <property type="match status" value="1"/>
</dbReference>
<dbReference type="PANTHER" id="PTHR12919">
    <property type="entry name" value="30S RIBOSOMAL PROTEIN S16"/>
    <property type="match status" value="1"/>
</dbReference>
<dbReference type="PANTHER" id="PTHR12919:SF20">
    <property type="entry name" value="SMALL RIBOSOMAL SUBUNIT PROTEIN BS16M"/>
    <property type="match status" value="1"/>
</dbReference>
<dbReference type="Pfam" id="PF00886">
    <property type="entry name" value="Ribosomal_S16"/>
    <property type="match status" value="1"/>
</dbReference>
<dbReference type="SUPFAM" id="SSF54565">
    <property type="entry name" value="Ribosomal protein S16"/>
    <property type="match status" value="1"/>
</dbReference>
<keyword id="KW-1185">Reference proteome</keyword>
<keyword id="KW-0687">Ribonucleoprotein</keyword>
<keyword id="KW-0689">Ribosomal protein</keyword>
<organism>
    <name type="scientific">Phytoplasma australiense</name>
    <dbReference type="NCBI Taxonomy" id="59748"/>
    <lineage>
        <taxon>Bacteria</taxon>
        <taxon>Bacillati</taxon>
        <taxon>Mycoplasmatota</taxon>
        <taxon>Mollicutes</taxon>
        <taxon>Acholeplasmatales</taxon>
        <taxon>Acholeplasmataceae</taxon>
        <taxon>Candidatus Phytoplasma</taxon>
        <taxon>16SrXII (Stolbur group)</taxon>
    </lineage>
</organism>
<reference key="1">
    <citation type="journal article" date="2008" name="J. Bacteriol.">
        <title>Comparative genome analysis of 'Candidatus Phytoplasma australiense' (subgroup tuf-Australia I; rp-A) and 'Ca. Phytoplasma asteris' strains OY-M and AY-WB.</title>
        <authorList>
            <person name="Tran-Nguyen L.T."/>
            <person name="Kube M."/>
            <person name="Schneider B."/>
            <person name="Reinhardt R."/>
            <person name="Gibb K.S."/>
        </authorList>
    </citation>
    <scope>NUCLEOTIDE SEQUENCE [LARGE SCALE GENOMIC DNA]</scope>
</reference>
<comment type="similarity">
    <text evidence="1">Belongs to the bacterial ribosomal protein bS16 family.</text>
</comment>
<sequence length="91" mass="10610">MAIKMRLQRFGVHKRPFYRVVASDSRVTRDGKFLDIVGTYDTILNIIKLDNEKVQKWLSCGAQPTQTVKKILKKNFVFQKDNQIKKPQTAK</sequence>
<accession>B1VAB0</accession>
<feature type="chain" id="PRO_1000196452" description="Small ribosomal subunit protein bS16">
    <location>
        <begin position="1"/>
        <end position="91"/>
    </location>
</feature>